<evidence type="ECO:0000255" key="1">
    <source>
        <dbReference type="HAMAP-Rule" id="MF_00019"/>
    </source>
</evidence>
<feature type="chain" id="PRO_1000001864" description="Phosphate acyltransferase">
    <location>
        <begin position="1"/>
        <end position="344"/>
    </location>
</feature>
<gene>
    <name evidence="1" type="primary">plsX</name>
    <name type="ordered locus">YPDSF_1851</name>
</gene>
<sequence>MACLTLALDAMGGDFGPCVTVPASLQALASNPQLKLLLVGNPDTITPLLANADSLLLERLQVIPAEHVIASDAKPSQAIRASRGTSMRVALELVKNGEAAACVSAGNTGALMGLAKMMIKPLEGIARPALMTVIPNQRRSKTVVLDLGANVECDSTMLVQFAVMGSVMAEEVVGIVEPRVALLNIGEEENKGLDNIREAAAVLKNTPAINYIGYLEGNDLLTGKTDVMVCDGFVGNVTLKTMEGVIRMFLSLLKPSGEGSKQSWWLKLIGRWLQKRVAKRFGHLNPDQYNGACLLGLRGIVIKSHGAANQRAFAVAIEQAVQAVQRQVPERIAARLEAVLPKSD</sequence>
<organism>
    <name type="scientific">Yersinia pestis (strain Pestoides F)</name>
    <dbReference type="NCBI Taxonomy" id="386656"/>
    <lineage>
        <taxon>Bacteria</taxon>
        <taxon>Pseudomonadati</taxon>
        <taxon>Pseudomonadota</taxon>
        <taxon>Gammaproteobacteria</taxon>
        <taxon>Enterobacterales</taxon>
        <taxon>Yersiniaceae</taxon>
        <taxon>Yersinia</taxon>
    </lineage>
</organism>
<comment type="function">
    <text evidence="1">Catalyzes the reversible formation of acyl-phosphate (acyl-PO(4)) from acyl-[acyl-carrier-protein] (acyl-ACP). This enzyme utilizes acyl-ACP as fatty acyl donor, but not acyl-CoA.</text>
</comment>
<comment type="catalytic activity">
    <reaction evidence="1">
        <text>a fatty acyl-[ACP] + phosphate = an acyl phosphate + holo-[ACP]</text>
        <dbReference type="Rhea" id="RHEA:42292"/>
        <dbReference type="Rhea" id="RHEA-COMP:9685"/>
        <dbReference type="Rhea" id="RHEA-COMP:14125"/>
        <dbReference type="ChEBI" id="CHEBI:43474"/>
        <dbReference type="ChEBI" id="CHEBI:59918"/>
        <dbReference type="ChEBI" id="CHEBI:64479"/>
        <dbReference type="ChEBI" id="CHEBI:138651"/>
        <dbReference type="EC" id="2.3.1.274"/>
    </reaction>
</comment>
<comment type="pathway">
    <text evidence="1">Lipid metabolism; phospholipid metabolism.</text>
</comment>
<comment type="subunit">
    <text evidence="1">Homodimer. Probably interacts with PlsY.</text>
</comment>
<comment type="subcellular location">
    <subcellularLocation>
        <location evidence="1">Cytoplasm</location>
    </subcellularLocation>
    <text evidence="1">Associated with the membrane possibly through PlsY.</text>
</comment>
<comment type="similarity">
    <text evidence="1">Belongs to the PlsX family.</text>
</comment>
<protein>
    <recommendedName>
        <fullName evidence="1">Phosphate acyltransferase</fullName>
        <ecNumber evidence="1">2.3.1.274</ecNumber>
    </recommendedName>
    <alternativeName>
        <fullName evidence="1">Acyl-ACP phosphotransacylase</fullName>
    </alternativeName>
    <alternativeName>
        <fullName evidence="1">Acyl-[acyl-carrier-protein]--phosphate acyltransferase</fullName>
    </alternativeName>
    <alternativeName>
        <fullName evidence="1">Phosphate-acyl-ACP acyltransferase</fullName>
    </alternativeName>
</protein>
<reference key="1">
    <citation type="submission" date="2007-02" db="EMBL/GenBank/DDBJ databases">
        <title>Complete sequence of chromosome of Yersinia pestis Pestoides F.</title>
        <authorList>
            <consortium name="US DOE Joint Genome Institute"/>
            <person name="Copeland A."/>
            <person name="Lucas S."/>
            <person name="Lapidus A."/>
            <person name="Barry K."/>
            <person name="Detter J.C."/>
            <person name="Glavina del Rio T."/>
            <person name="Hammon N."/>
            <person name="Israni S."/>
            <person name="Dalin E."/>
            <person name="Tice H."/>
            <person name="Pitluck S."/>
            <person name="Di Bartolo G."/>
            <person name="Chain P."/>
            <person name="Malfatti S."/>
            <person name="Shin M."/>
            <person name="Vergez L."/>
            <person name="Schmutz J."/>
            <person name="Larimer F."/>
            <person name="Land M."/>
            <person name="Hauser L."/>
            <person name="Worsham P."/>
            <person name="Chu M."/>
            <person name="Bearden S."/>
            <person name="Garcia E."/>
            <person name="Richardson P."/>
        </authorList>
    </citation>
    <scope>NUCLEOTIDE SEQUENCE [LARGE SCALE GENOMIC DNA]</scope>
    <source>
        <strain>Pestoides F</strain>
    </source>
</reference>
<accession>A4TLS4</accession>
<proteinExistence type="inferred from homology"/>
<keyword id="KW-0963">Cytoplasm</keyword>
<keyword id="KW-0444">Lipid biosynthesis</keyword>
<keyword id="KW-0443">Lipid metabolism</keyword>
<keyword id="KW-0594">Phospholipid biosynthesis</keyword>
<keyword id="KW-1208">Phospholipid metabolism</keyword>
<keyword id="KW-0808">Transferase</keyword>
<dbReference type="EC" id="2.3.1.274" evidence="1"/>
<dbReference type="EMBL" id="CP000668">
    <property type="protein sequence ID" value="ABP40236.1"/>
    <property type="molecule type" value="Genomic_DNA"/>
</dbReference>
<dbReference type="RefSeq" id="WP_002210932.1">
    <property type="nucleotide sequence ID" value="NZ_CP009715.1"/>
</dbReference>
<dbReference type="SMR" id="A4TLS4"/>
<dbReference type="GeneID" id="57976975"/>
<dbReference type="KEGG" id="ypp:YPDSF_1851"/>
<dbReference type="UniPathway" id="UPA00085"/>
<dbReference type="GO" id="GO:0005737">
    <property type="term" value="C:cytoplasm"/>
    <property type="evidence" value="ECO:0007669"/>
    <property type="project" value="UniProtKB-SubCell"/>
</dbReference>
<dbReference type="GO" id="GO:0043811">
    <property type="term" value="F:phosphate:acyl-[acyl carrier protein] acyltransferase activity"/>
    <property type="evidence" value="ECO:0007669"/>
    <property type="project" value="UniProtKB-UniRule"/>
</dbReference>
<dbReference type="GO" id="GO:0006633">
    <property type="term" value="P:fatty acid biosynthetic process"/>
    <property type="evidence" value="ECO:0007669"/>
    <property type="project" value="UniProtKB-UniRule"/>
</dbReference>
<dbReference type="GO" id="GO:0008654">
    <property type="term" value="P:phospholipid biosynthetic process"/>
    <property type="evidence" value="ECO:0007669"/>
    <property type="project" value="UniProtKB-KW"/>
</dbReference>
<dbReference type="FunFam" id="3.40.718.10:FF:000008">
    <property type="entry name" value="Phosphate acyltransferase"/>
    <property type="match status" value="1"/>
</dbReference>
<dbReference type="Gene3D" id="3.40.718.10">
    <property type="entry name" value="Isopropylmalate Dehydrogenase"/>
    <property type="match status" value="1"/>
</dbReference>
<dbReference type="HAMAP" id="MF_00019">
    <property type="entry name" value="PlsX"/>
    <property type="match status" value="1"/>
</dbReference>
<dbReference type="InterPro" id="IPR003664">
    <property type="entry name" value="FA_synthesis"/>
</dbReference>
<dbReference type="InterPro" id="IPR012281">
    <property type="entry name" value="Phospholipid_synth_PlsX-like"/>
</dbReference>
<dbReference type="NCBIfam" id="TIGR00182">
    <property type="entry name" value="plsX"/>
    <property type="match status" value="1"/>
</dbReference>
<dbReference type="PANTHER" id="PTHR30100">
    <property type="entry name" value="FATTY ACID/PHOSPHOLIPID SYNTHESIS PROTEIN PLSX"/>
    <property type="match status" value="1"/>
</dbReference>
<dbReference type="PANTHER" id="PTHR30100:SF1">
    <property type="entry name" value="PHOSPHATE ACYLTRANSFERASE"/>
    <property type="match status" value="1"/>
</dbReference>
<dbReference type="Pfam" id="PF02504">
    <property type="entry name" value="FA_synthesis"/>
    <property type="match status" value="1"/>
</dbReference>
<dbReference type="PIRSF" id="PIRSF002465">
    <property type="entry name" value="Phsphlp_syn_PlsX"/>
    <property type="match status" value="1"/>
</dbReference>
<dbReference type="SUPFAM" id="SSF53659">
    <property type="entry name" value="Isocitrate/Isopropylmalate dehydrogenase-like"/>
    <property type="match status" value="1"/>
</dbReference>
<name>PLSX_YERPP</name>